<proteinExistence type="inferred from homology"/>
<geneLocation type="chloroplast"/>
<protein>
    <recommendedName>
        <fullName evidence="1">Large ribosomal subunit protein uL16c</fullName>
    </recommendedName>
    <alternativeName>
        <fullName evidence="2">50S ribosomal protein L16, chloroplastic</fullName>
    </alternativeName>
</protein>
<evidence type="ECO:0000255" key="1">
    <source>
        <dbReference type="HAMAP-Rule" id="MF_01342"/>
    </source>
</evidence>
<evidence type="ECO:0000305" key="2"/>
<dbReference type="EMBL" id="EF380352">
    <property type="protein sequence ID" value="ABQ43297.1"/>
    <property type="molecule type" value="Genomic_DNA"/>
</dbReference>
<dbReference type="RefSeq" id="YP_001294136.1">
    <property type="nucleotide sequence ID" value="NC_009598.1"/>
</dbReference>
<dbReference type="SMR" id="A6MMG0"/>
<dbReference type="GeneID" id="5236514"/>
<dbReference type="GO" id="GO:0009507">
    <property type="term" value="C:chloroplast"/>
    <property type="evidence" value="ECO:0007669"/>
    <property type="project" value="UniProtKB-SubCell"/>
</dbReference>
<dbReference type="GO" id="GO:0005762">
    <property type="term" value="C:mitochondrial large ribosomal subunit"/>
    <property type="evidence" value="ECO:0007669"/>
    <property type="project" value="TreeGrafter"/>
</dbReference>
<dbReference type="GO" id="GO:0019843">
    <property type="term" value="F:rRNA binding"/>
    <property type="evidence" value="ECO:0007669"/>
    <property type="project" value="InterPro"/>
</dbReference>
<dbReference type="GO" id="GO:0003735">
    <property type="term" value="F:structural constituent of ribosome"/>
    <property type="evidence" value="ECO:0007669"/>
    <property type="project" value="InterPro"/>
</dbReference>
<dbReference type="GO" id="GO:0032543">
    <property type="term" value="P:mitochondrial translation"/>
    <property type="evidence" value="ECO:0007669"/>
    <property type="project" value="TreeGrafter"/>
</dbReference>
<dbReference type="CDD" id="cd01433">
    <property type="entry name" value="Ribosomal_L16_L10e"/>
    <property type="match status" value="1"/>
</dbReference>
<dbReference type="FunFam" id="3.90.1170.10:FF:000001">
    <property type="entry name" value="50S ribosomal protein L16"/>
    <property type="match status" value="1"/>
</dbReference>
<dbReference type="Gene3D" id="3.90.1170.10">
    <property type="entry name" value="Ribosomal protein L10e/L16"/>
    <property type="match status" value="1"/>
</dbReference>
<dbReference type="HAMAP" id="MF_01342">
    <property type="entry name" value="Ribosomal_uL16"/>
    <property type="match status" value="1"/>
</dbReference>
<dbReference type="InterPro" id="IPR047873">
    <property type="entry name" value="Ribosomal_uL16"/>
</dbReference>
<dbReference type="InterPro" id="IPR000114">
    <property type="entry name" value="Ribosomal_uL16_bact-type"/>
</dbReference>
<dbReference type="InterPro" id="IPR020798">
    <property type="entry name" value="Ribosomal_uL16_CS"/>
</dbReference>
<dbReference type="InterPro" id="IPR016180">
    <property type="entry name" value="Ribosomal_uL16_dom"/>
</dbReference>
<dbReference type="InterPro" id="IPR036920">
    <property type="entry name" value="Ribosomal_uL16_sf"/>
</dbReference>
<dbReference type="NCBIfam" id="TIGR01164">
    <property type="entry name" value="rplP_bact"/>
    <property type="match status" value="1"/>
</dbReference>
<dbReference type="PANTHER" id="PTHR12220">
    <property type="entry name" value="50S/60S RIBOSOMAL PROTEIN L16"/>
    <property type="match status" value="1"/>
</dbReference>
<dbReference type="PANTHER" id="PTHR12220:SF13">
    <property type="entry name" value="LARGE RIBOSOMAL SUBUNIT PROTEIN UL16M"/>
    <property type="match status" value="1"/>
</dbReference>
<dbReference type="Pfam" id="PF00252">
    <property type="entry name" value="Ribosomal_L16"/>
    <property type="match status" value="1"/>
</dbReference>
<dbReference type="PRINTS" id="PR00060">
    <property type="entry name" value="RIBOSOMALL16"/>
</dbReference>
<dbReference type="SUPFAM" id="SSF54686">
    <property type="entry name" value="Ribosomal protein L16p/L10e"/>
    <property type="match status" value="1"/>
</dbReference>
<dbReference type="PROSITE" id="PS00586">
    <property type="entry name" value="RIBOSOMAL_L16_1"/>
    <property type="match status" value="1"/>
</dbReference>
<dbReference type="PROSITE" id="PS00701">
    <property type="entry name" value="RIBOSOMAL_L16_2"/>
    <property type="match status" value="1"/>
</dbReference>
<name>RK16_CHLSC</name>
<comment type="subunit">
    <text evidence="1">Part of the 50S ribosomal subunit.</text>
</comment>
<comment type="subcellular location">
    <subcellularLocation>
        <location>Plastid</location>
        <location>Chloroplast</location>
    </subcellularLocation>
</comment>
<comment type="similarity">
    <text evidence="1">Belongs to the universal ribosomal protein uL16 family.</text>
</comment>
<organism>
    <name type="scientific">Chloranthus spicatus</name>
    <name type="common">Chulantree</name>
    <name type="synonym">Nigrina spicata</name>
    <dbReference type="NCBI Taxonomy" id="13006"/>
    <lineage>
        <taxon>Eukaryota</taxon>
        <taxon>Viridiplantae</taxon>
        <taxon>Streptophyta</taxon>
        <taxon>Embryophyta</taxon>
        <taxon>Tracheophyta</taxon>
        <taxon>Spermatophyta</taxon>
        <taxon>Magnoliopsida</taxon>
        <taxon>Chloranthales</taxon>
        <taxon>Chloranthaceae</taxon>
        <taxon>Chloranthus</taxon>
    </lineage>
</organism>
<gene>
    <name evidence="1" type="primary">rpl16</name>
</gene>
<feature type="chain" id="PRO_0000354622" description="Large ribosomal subunit protein uL16c">
    <location>
        <begin position="1"/>
        <end position="136"/>
    </location>
</feature>
<accession>A6MMG0</accession>
<keyword id="KW-0150">Chloroplast</keyword>
<keyword id="KW-0934">Plastid</keyword>
<keyword id="KW-0687">Ribonucleoprotein</keyword>
<keyword id="KW-0689">Ribosomal protein</keyword>
<reference key="1">
    <citation type="journal article" date="2007" name="Mol. Phylogenet. Evol.">
        <title>Phylogenetic and evolutionary implications of complete chloroplast genome sequences of four early-diverging angiosperms: Buxus (Buxaceae), Chloranthus (Chloranthaceae), Dioscorea (Dioscoreaceae), and Illicium (Schisandraceae).</title>
        <authorList>
            <person name="Hansen D.R."/>
            <person name="Dastidar S.G."/>
            <person name="Cai Z."/>
            <person name="Penaflor C."/>
            <person name="Kuehl J.V."/>
            <person name="Boore J.L."/>
            <person name="Jansen R.K."/>
        </authorList>
    </citation>
    <scope>NUCLEOTIDE SEQUENCE [LARGE SCALE GENOMIC DNA]</scope>
</reference>
<sequence>MLSNPKRTRFRKQHRGRMKGISYRGNNICFGRYALQALEPAWITSRQIEAGRRAMTRYARRGGKIWVRIFPDKPVTIRPTETRMGSGKGSPEYWVAVVKPGRILYEMAGVSESIARAAISIAACKMPIRTQFVIAE</sequence>